<name>FLGH_CHESB</name>
<organism>
    <name type="scientific">Chelativorans sp. (strain BNC1)</name>
    <dbReference type="NCBI Taxonomy" id="266779"/>
    <lineage>
        <taxon>Bacteria</taxon>
        <taxon>Pseudomonadati</taxon>
        <taxon>Pseudomonadota</taxon>
        <taxon>Alphaproteobacteria</taxon>
        <taxon>Hyphomicrobiales</taxon>
        <taxon>Phyllobacteriaceae</taxon>
        <taxon>Chelativorans</taxon>
    </lineage>
</organism>
<dbReference type="EMBL" id="CP000390">
    <property type="protein sequence ID" value="ABG61695.1"/>
    <property type="molecule type" value="Genomic_DNA"/>
</dbReference>
<dbReference type="SMR" id="Q11LN0"/>
<dbReference type="STRING" id="266779.Meso_0291"/>
<dbReference type="KEGG" id="mes:Meso_0291"/>
<dbReference type="eggNOG" id="COG2063">
    <property type="taxonomic scope" value="Bacteria"/>
</dbReference>
<dbReference type="HOGENOM" id="CLU_069313_1_2_5"/>
<dbReference type="OrthoDB" id="9789227at2"/>
<dbReference type="GO" id="GO:0009427">
    <property type="term" value="C:bacterial-type flagellum basal body, distal rod, L ring"/>
    <property type="evidence" value="ECO:0007669"/>
    <property type="project" value="InterPro"/>
</dbReference>
<dbReference type="GO" id="GO:0009279">
    <property type="term" value="C:cell outer membrane"/>
    <property type="evidence" value="ECO:0007669"/>
    <property type="project" value="UniProtKB-SubCell"/>
</dbReference>
<dbReference type="GO" id="GO:0003774">
    <property type="term" value="F:cytoskeletal motor activity"/>
    <property type="evidence" value="ECO:0007669"/>
    <property type="project" value="InterPro"/>
</dbReference>
<dbReference type="GO" id="GO:0071973">
    <property type="term" value="P:bacterial-type flagellum-dependent cell motility"/>
    <property type="evidence" value="ECO:0007669"/>
    <property type="project" value="InterPro"/>
</dbReference>
<dbReference type="HAMAP" id="MF_00415">
    <property type="entry name" value="FlgH"/>
    <property type="match status" value="1"/>
</dbReference>
<dbReference type="InterPro" id="IPR000527">
    <property type="entry name" value="Flag_Lring"/>
</dbReference>
<dbReference type="NCBIfam" id="NF001305">
    <property type="entry name" value="PRK00249.1-5"/>
    <property type="match status" value="1"/>
</dbReference>
<dbReference type="PANTHER" id="PTHR34933">
    <property type="entry name" value="FLAGELLAR L-RING PROTEIN"/>
    <property type="match status" value="1"/>
</dbReference>
<dbReference type="PANTHER" id="PTHR34933:SF1">
    <property type="entry name" value="FLAGELLAR L-RING PROTEIN"/>
    <property type="match status" value="1"/>
</dbReference>
<dbReference type="Pfam" id="PF02107">
    <property type="entry name" value="FlgH"/>
    <property type="match status" value="1"/>
</dbReference>
<dbReference type="PRINTS" id="PR01008">
    <property type="entry name" value="FLGLRINGFLGH"/>
</dbReference>
<dbReference type="PROSITE" id="PS51257">
    <property type="entry name" value="PROKAR_LIPOPROTEIN"/>
    <property type="match status" value="1"/>
</dbReference>
<comment type="function">
    <text evidence="1">Assembles around the rod to form the L-ring and probably protects the motor/basal body from shearing forces during rotation.</text>
</comment>
<comment type="subunit">
    <text evidence="1">The basal body constitutes a major portion of the flagellar organelle and consists of four rings (L,P,S, and M) mounted on a central rod.</text>
</comment>
<comment type="subcellular location">
    <subcellularLocation>
        <location evidence="1">Cell outer membrane</location>
        <topology evidence="1">Lipid-anchor</topology>
    </subcellularLocation>
    <subcellularLocation>
        <location evidence="1">Bacterial flagellum basal body</location>
    </subcellularLocation>
</comment>
<comment type="similarity">
    <text evidence="1">Belongs to the FlgH family.</text>
</comment>
<protein>
    <recommendedName>
        <fullName evidence="1">Flagellar L-ring protein</fullName>
    </recommendedName>
    <alternativeName>
        <fullName evidence="1">Basal body L-ring protein</fullName>
    </alternativeName>
</protein>
<feature type="signal peptide" evidence="1">
    <location>
        <begin position="1"/>
        <end position="18"/>
    </location>
</feature>
<feature type="chain" id="PRO_1000123952" description="Flagellar L-ring protein">
    <location>
        <begin position="19"/>
        <end position="235"/>
    </location>
</feature>
<feature type="lipid moiety-binding region" description="N-palmitoyl cysteine" evidence="1">
    <location>
        <position position="19"/>
    </location>
</feature>
<feature type="lipid moiety-binding region" description="S-diacylglycerol cysteine" evidence="1">
    <location>
        <position position="19"/>
    </location>
</feature>
<proteinExistence type="inferred from homology"/>
<sequence>MNKIAGTLFLLAGLAMAGCTTTEELGKPPALSPVGSGAEPTAMQAYHYPDRRQAHVSRYSLWSDRQSRLFTDPRALEVGDILTVVISINDKAKFENESERSRQATRNLGLAGTFAIGSATGSAEADADIGSGTSTVGSGATKRSEDMRLVIAAIVTERLPNGNLRISGTQEVRVNAELRVLTIAGLVRPADIGPNNTISYERIAEARISYGGRGRLTEVQQPPYGQQFLDTVLPF</sequence>
<accession>Q11LN0</accession>
<reference key="1">
    <citation type="submission" date="2006-06" db="EMBL/GenBank/DDBJ databases">
        <title>Complete sequence of chromosome of Mesorhizobium sp. BNC1.</title>
        <authorList>
            <consortium name="US DOE Joint Genome Institute"/>
            <person name="Copeland A."/>
            <person name="Lucas S."/>
            <person name="Lapidus A."/>
            <person name="Barry K."/>
            <person name="Detter J.C."/>
            <person name="Glavina del Rio T."/>
            <person name="Hammon N."/>
            <person name="Israni S."/>
            <person name="Dalin E."/>
            <person name="Tice H."/>
            <person name="Pitluck S."/>
            <person name="Chertkov O."/>
            <person name="Brettin T."/>
            <person name="Bruce D."/>
            <person name="Han C."/>
            <person name="Tapia R."/>
            <person name="Gilna P."/>
            <person name="Schmutz J."/>
            <person name="Larimer F."/>
            <person name="Land M."/>
            <person name="Hauser L."/>
            <person name="Kyrpides N."/>
            <person name="Mikhailova N."/>
            <person name="Richardson P."/>
        </authorList>
    </citation>
    <scope>NUCLEOTIDE SEQUENCE [LARGE SCALE GENOMIC DNA]</scope>
    <source>
        <strain>BNC1</strain>
    </source>
</reference>
<keyword id="KW-0975">Bacterial flagellum</keyword>
<keyword id="KW-0998">Cell outer membrane</keyword>
<keyword id="KW-0449">Lipoprotein</keyword>
<keyword id="KW-0472">Membrane</keyword>
<keyword id="KW-0564">Palmitate</keyword>
<keyword id="KW-0732">Signal</keyword>
<evidence type="ECO:0000255" key="1">
    <source>
        <dbReference type="HAMAP-Rule" id="MF_00415"/>
    </source>
</evidence>
<gene>
    <name evidence="1" type="primary">flgH</name>
    <name type="ordered locus">Meso_0291</name>
</gene>